<dbReference type="EC" id="1.2.1.59" evidence="1"/>
<dbReference type="EMBL" id="CP000745">
    <property type="protein sequence ID" value="ABR66390.1"/>
    <property type="molecule type" value="Genomic_DNA"/>
</dbReference>
<dbReference type="SMR" id="A6VIW4"/>
<dbReference type="STRING" id="426368.MmarC7_1327"/>
<dbReference type="KEGG" id="mmz:MmarC7_1327"/>
<dbReference type="eggNOG" id="arCOG00493">
    <property type="taxonomic scope" value="Archaea"/>
</dbReference>
<dbReference type="HOGENOM" id="CLU_069533_0_0_2"/>
<dbReference type="OrthoDB" id="295712at2157"/>
<dbReference type="UniPathway" id="UPA00109">
    <property type="reaction ID" value="UER00184"/>
</dbReference>
<dbReference type="GO" id="GO:0005737">
    <property type="term" value="C:cytoplasm"/>
    <property type="evidence" value="ECO:0007669"/>
    <property type="project" value="UniProtKB-SubCell"/>
</dbReference>
<dbReference type="GO" id="GO:0008839">
    <property type="term" value="F:4-hydroxy-tetrahydrodipicolinate reductase"/>
    <property type="evidence" value="ECO:0007669"/>
    <property type="project" value="InterPro"/>
</dbReference>
<dbReference type="GO" id="GO:0004365">
    <property type="term" value="F:glyceraldehyde-3-phosphate dehydrogenase (NAD+) (phosphorylating) activity"/>
    <property type="evidence" value="ECO:0007669"/>
    <property type="project" value="UniProtKB-UniRule"/>
</dbReference>
<dbReference type="GO" id="GO:0047100">
    <property type="term" value="F:glyceraldehyde-3-phosphate dehydrogenase (NADP+) (phosphorylating) activity"/>
    <property type="evidence" value="ECO:0007669"/>
    <property type="project" value="RHEA"/>
</dbReference>
<dbReference type="GO" id="GO:0051287">
    <property type="term" value="F:NAD binding"/>
    <property type="evidence" value="ECO:0007669"/>
    <property type="project" value="InterPro"/>
</dbReference>
<dbReference type="GO" id="GO:0050661">
    <property type="term" value="F:NADP binding"/>
    <property type="evidence" value="ECO:0007669"/>
    <property type="project" value="InterPro"/>
</dbReference>
<dbReference type="GO" id="GO:0006096">
    <property type="term" value="P:glycolytic process"/>
    <property type="evidence" value="ECO:0007669"/>
    <property type="project" value="UniProtKB-UniRule"/>
</dbReference>
<dbReference type="GO" id="GO:0009089">
    <property type="term" value="P:lysine biosynthetic process via diaminopimelate"/>
    <property type="evidence" value="ECO:0007669"/>
    <property type="project" value="InterPro"/>
</dbReference>
<dbReference type="CDD" id="cd18127">
    <property type="entry name" value="GAPDH_II_C"/>
    <property type="match status" value="1"/>
</dbReference>
<dbReference type="CDD" id="cd02278">
    <property type="entry name" value="GAPDH_II_N"/>
    <property type="match status" value="1"/>
</dbReference>
<dbReference type="Gene3D" id="3.30.360.10">
    <property type="entry name" value="Dihydrodipicolinate Reductase, domain 2"/>
    <property type="match status" value="1"/>
</dbReference>
<dbReference type="Gene3D" id="3.40.50.720">
    <property type="entry name" value="NAD(P)-binding Rossmann-like Domain"/>
    <property type="match status" value="1"/>
</dbReference>
<dbReference type="HAMAP" id="MF_00559">
    <property type="entry name" value="G3P_dehdrog_arch"/>
    <property type="match status" value="1"/>
</dbReference>
<dbReference type="InterPro" id="IPR000846">
    <property type="entry name" value="DapB_N"/>
</dbReference>
<dbReference type="InterPro" id="IPR020831">
    <property type="entry name" value="GlycerAld/Erythrose_P_DH"/>
</dbReference>
<dbReference type="InterPro" id="IPR020830">
    <property type="entry name" value="GlycerAld_3-P_DH_AS"/>
</dbReference>
<dbReference type="InterPro" id="IPR020829">
    <property type="entry name" value="GlycerAld_3-P_DH_cat"/>
</dbReference>
<dbReference type="InterPro" id="IPR020828">
    <property type="entry name" value="GlycerAld_3-P_DH_NAD(P)-bd"/>
</dbReference>
<dbReference type="InterPro" id="IPR006436">
    <property type="entry name" value="Glyceraldehyde-3-P_DH_2_arc"/>
</dbReference>
<dbReference type="InterPro" id="IPR036291">
    <property type="entry name" value="NAD(P)-bd_dom_sf"/>
</dbReference>
<dbReference type="NCBIfam" id="TIGR01546">
    <property type="entry name" value="GAPDH-II_archae"/>
    <property type="match status" value="1"/>
</dbReference>
<dbReference type="NCBIfam" id="NF003251">
    <property type="entry name" value="PRK04207.1"/>
    <property type="match status" value="1"/>
</dbReference>
<dbReference type="Pfam" id="PF01113">
    <property type="entry name" value="DapB_N"/>
    <property type="match status" value="1"/>
</dbReference>
<dbReference type="Pfam" id="PF02800">
    <property type="entry name" value="Gp_dh_C"/>
    <property type="match status" value="1"/>
</dbReference>
<dbReference type="PIRSF" id="PIRSF000149">
    <property type="entry name" value="GAP_DH"/>
    <property type="match status" value="1"/>
</dbReference>
<dbReference type="SMART" id="SM00846">
    <property type="entry name" value="Gp_dh_N"/>
    <property type="match status" value="1"/>
</dbReference>
<dbReference type="SUPFAM" id="SSF55347">
    <property type="entry name" value="Glyceraldehyde-3-phosphate dehydrogenase-like, C-terminal domain"/>
    <property type="match status" value="1"/>
</dbReference>
<dbReference type="SUPFAM" id="SSF51735">
    <property type="entry name" value="NAD(P)-binding Rossmann-fold domains"/>
    <property type="match status" value="1"/>
</dbReference>
<dbReference type="PROSITE" id="PS00071">
    <property type="entry name" value="GAPDH"/>
    <property type="match status" value="1"/>
</dbReference>
<feature type="chain" id="PRO_1000061118" description="Glyceraldehyde-3-phosphate dehydrogenase">
    <location>
        <begin position="1"/>
        <end position="340"/>
    </location>
</feature>
<feature type="active site" description="Nucleophile" evidence="1">
    <location>
        <position position="141"/>
    </location>
</feature>
<feature type="binding site" evidence="1">
    <location>
        <begin position="11"/>
        <end position="12"/>
    </location>
    <ligand>
        <name>NAD(+)</name>
        <dbReference type="ChEBI" id="CHEBI:57540"/>
    </ligand>
</feature>
<feature type="binding site" evidence="1">
    <location>
        <position position="111"/>
    </location>
    <ligand>
        <name>NAD(+)</name>
        <dbReference type="ChEBI" id="CHEBI:57540"/>
    </ligand>
</feature>
<feature type="binding site" evidence="1">
    <location>
        <begin position="140"/>
        <end position="142"/>
    </location>
    <ligand>
        <name>D-glyceraldehyde 3-phosphate</name>
        <dbReference type="ChEBI" id="CHEBI:59776"/>
    </ligand>
</feature>
<feature type="binding site" evidence="1">
    <location>
        <position position="169"/>
    </location>
    <ligand>
        <name>NAD(+)</name>
        <dbReference type="ChEBI" id="CHEBI:57540"/>
    </ligand>
</feature>
<feature type="binding site" evidence="1">
    <location>
        <begin position="195"/>
        <end position="196"/>
    </location>
    <ligand>
        <name>D-glyceraldehyde 3-phosphate</name>
        <dbReference type="ChEBI" id="CHEBI:59776"/>
    </ligand>
</feature>
<feature type="binding site" evidence="1">
    <location>
        <position position="303"/>
    </location>
    <ligand>
        <name>NAD(+)</name>
        <dbReference type="ChEBI" id="CHEBI:57540"/>
    </ligand>
</feature>
<comment type="catalytic activity">
    <reaction evidence="1">
        <text>D-glyceraldehyde 3-phosphate + phosphate + NADP(+) = (2R)-3-phospho-glyceroyl phosphate + NADPH + H(+)</text>
        <dbReference type="Rhea" id="RHEA:10296"/>
        <dbReference type="ChEBI" id="CHEBI:15378"/>
        <dbReference type="ChEBI" id="CHEBI:43474"/>
        <dbReference type="ChEBI" id="CHEBI:57604"/>
        <dbReference type="ChEBI" id="CHEBI:57783"/>
        <dbReference type="ChEBI" id="CHEBI:58349"/>
        <dbReference type="ChEBI" id="CHEBI:59776"/>
        <dbReference type="EC" id="1.2.1.59"/>
    </reaction>
</comment>
<comment type="catalytic activity">
    <reaction evidence="1">
        <text>D-glyceraldehyde 3-phosphate + phosphate + NAD(+) = (2R)-3-phospho-glyceroyl phosphate + NADH + H(+)</text>
        <dbReference type="Rhea" id="RHEA:10300"/>
        <dbReference type="ChEBI" id="CHEBI:15378"/>
        <dbReference type="ChEBI" id="CHEBI:43474"/>
        <dbReference type="ChEBI" id="CHEBI:57540"/>
        <dbReference type="ChEBI" id="CHEBI:57604"/>
        <dbReference type="ChEBI" id="CHEBI:57945"/>
        <dbReference type="ChEBI" id="CHEBI:59776"/>
        <dbReference type="EC" id="1.2.1.59"/>
    </reaction>
</comment>
<comment type="pathway">
    <text evidence="1">Carbohydrate degradation; glycolysis; pyruvate from D-glyceraldehyde 3-phosphate: step 1/5.</text>
</comment>
<comment type="subunit">
    <text evidence="1">Homotetramer.</text>
</comment>
<comment type="subcellular location">
    <subcellularLocation>
        <location evidence="1">Cytoplasm</location>
    </subcellularLocation>
</comment>
<comment type="similarity">
    <text evidence="1">Belongs to the glyceraldehyde-3-phosphate dehydrogenase family.</text>
</comment>
<name>G3P_METM7</name>
<organism>
    <name type="scientific">Methanococcus maripaludis (strain C7 / ATCC BAA-1331)</name>
    <dbReference type="NCBI Taxonomy" id="426368"/>
    <lineage>
        <taxon>Archaea</taxon>
        <taxon>Methanobacteriati</taxon>
        <taxon>Methanobacteriota</taxon>
        <taxon>Methanomada group</taxon>
        <taxon>Methanococci</taxon>
        <taxon>Methanococcales</taxon>
        <taxon>Methanococcaceae</taxon>
        <taxon>Methanococcus</taxon>
    </lineage>
</organism>
<keyword id="KW-0963">Cytoplasm</keyword>
<keyword id="KW-0324">Glycolysis</keyword>
<keyword id="KW-0520">NAD</keyword>
<keyword id="KW-0521">NADP</keyword>
<keyword id="KW-0560">Oxidoreductase</keyword>
<reference key="1">
    <citation type="submission" date="2007-06" db="EMBL/GenBank/DDBJ databases">
        <title>Complete sequence of Methanococcus maripaludis C7.</title>
        <authorList>
            <consortium name="US DOE Joint Genome Institute"/>
            <person name="Copeland A."/>
            <person name="Lucas S."/>
            <person name="Lapidus A."/>
            <person name="Barry K."/>
            <person name="Glavina del Rio T."/>
            <person name="Dalin E."/>
            <person name="Tice H."/>
            <person name="Pitluck S."/>
            <person name="Clum A."/>
            <person name="Schmutz J."/>
            <person name="Larimer F."/>
            <person name="Land M."/>
            <person name="Hauser L."/>
            <person name="Kyrpides N."/>
            <person name="Anderson I."/>
            <person name="Sieprawska-Lupa M."/>
            <person name="Whitman W.B."/>
            <person name="Richardson P."/>
        </authorList>
    </citation>
    <scope>NUCLEOTIDE SEQUENCE [LARGE SCALE GENOMIC DNA]</scope>
    <source>
        <strain>C7 / ATCC BAA-1331</strain>
    </source>
</reference>
<protein>
    <recommendedName>
        <fullName evidence="1">Glyceraldehyde-3-phosphate dehydrogenase</fullName>
        <shortName evidence="1">GAPDH</shortName>
        <ecNumber evidence="1">1.2.1.59</ecNumber>
    </recommendedName>
    <alternativeName>
        <fullName evidence="1">NAD(P)-dependent glyceraldehyde-3-phosphate dehydrogenase</fullName>
    </alternativeName>
</protein>
<sequence>MVNVLINGYGSIGKRVADAVAKQDDMKVIGVTKTKPDFEARMAVEKGYKLFAAIPERKHLFEEAGIPVEGTLDDIIEDADIVVDGAPKKIGKANLENVYKKHGVKAIIQGGEKAGDAQDSFNSLWSYDRCYGKDYIRLVSCNTTGLCRSMYAINSVADILKARIVLIRRAADPNDVKTGPVNAIVPNPVTVPSHHGPDVVSVIPELDGKIMTSAVIVPTTLMHMHSIMVETSGTNRDEIIDALAKTPRILTLKASEGFDSTATIIEYARDLGRSRYDLNEIAVWEESVNVVDNEVYMMQAIHQESDVIPENVDCIRAMLEMESDNLKSIEKTNKAMGLIK</sequence>
<gene>
    <name evidence="1" type="primary">gap</name>
    <name type="ordered locus">MmarC7_1327</name>
</gene>
<accession>A6VIW4</accession>
<proteinExistence type="inferred from homology"/>
<evidence type="ECO:0000255" key="1">
    <source>
        <dbReference type="HAMAP-Rule" id="MF_00559"/>
    </source>
</evidence>